<protein>
    <recommendedName>
        <fullName>NADH-ubiquinone oxidoreductase chain 4L</fullName>
        <ecNumber>7.1.1.2</ecNumber>
    </recommendedName>
    <alternativeName>
        <fullName>NADH dehydrogenase subunit 4L</fullName>
    </alternativeName>
</protein>
<reference key="1">
    <citation type="journal article" date="2006" name="Mol. Phylogenet. Evol.">
        <title>Molecular systematics of Vampyressine bats (Phyllostomidae: Stenodermatinae) with comparison of direct and indirect surveys of mitochondrial DNA variation.</title>
        <authorList>
            <person name="Hoofer S.R."/>
            <person name="Baker R.J."/>
        </authorList>
    </citation>
    <scope>NUCLEOTIDE SEQUENCE [GENOMIC DNA]</scope>
</reference>
<evidence type="ECO:0000250" key="1">
    <source>
        <dbReference type="UniProtKB" id="P03901"/>
    </source>
</evidence>
<evidence type="ECO:0000250" key="2">
    <source>
        <dbReference type="UniProtKB" id="P03902"/>
    </source>
</evidence>
<evidence type="ECO:0000255" key="3"/>
<evidence type="ECO:0000305" key="4"/>
<geneLocation type="mitochondrion"/>
<name>NU4LM_VAMTH</name>
<proteinExistence type="inferred from homology"/>
<keyword id="KW-0249">Electron transport</keyword>
<keyword id="KW-0472">Membrane</keyword>
<keyword id="KW-0496">Mitochondrion</keyword>
<keyword id="KW-0999">Mitochondrion inner membrane</keyword>
<keyword id="KW-0520">NAD</keyword>
<keyword id="KW-0679">Respiratory chain</keyword>
<keyword id="KW-1278">Translocase</keyword>
<keyword id="KW-0812">Transmembrane</keyword>
<keyword id="KW-1133">Transmembrane helix</keyword>
<keyword id="KW-0813">Transport</keyword>
<keyword id="KW-0830">Ubiquinone</keyword>
<comment type="function">
    <text evidence="1">Core subunit of the mitochondrial membrane respiratory chain NADH dehydrogenase (Complex I) which catalyzes electron transfer from NADH through the respiratory chain, using ubiquinone as an electron acceptor. Part of the enzyme membrane arm which is embedded in the lipid bilayer and involved in proton translocation.</text>
</comment>
<comment type="catalytic activity">
    <reaction evidence="1">
        <text>a ubiquinone + NADH + 5 H(+)(in) = a ubiquinol + NAD(+) + 4 H(+)(out)</text>
        <dbReference type="Rhea" id="RHEA:29091"/>
        <dbReference type="Rhea" id="RHEA-COMP:9565"/>
        <dbReference type="Rhea" id="RHEA-COMP:9566"/>
        <dbReference type="ChEBI" id="CHEBI:15378"/>
        <dbReference type="ChEBI" id="CHEBI:16389"/>
        <dbReference type="ChEBI" id="CHEBI:17976"/>
        <dbReference type="ChEBI" id="CHEBI:57540"/>
        <dbReference type="ChEBI" id="CHEBI:57945"/>
        <dbReference type="EC" id="7.1.1.2"/>
    </reaction>
    <physiologicalReaction direction="left-to-right" evidence="1">
        <dbReference type="Rhea" id="RHEA:29092"/>
    </physiologicalReaction>
</comment>
<comment type="subunit">
    <text evidence="2">Core subunit of respiratory chain NADH dehydrogenase (Complex I) which is composed of 45 different subunits.</text>
</comment>
<comment type="subcellular location">
    <subcellularLocation>
        <location evidence="2">Mitochondrion inner membrane</location>
        <topology evidence="3">Multi-pass membrane protein</topology>
    </subcellularLocation>
</comment>
<comment type="similarity">
    <text evidence="4">Belongs to the complex I subunit 4L family.</text>
</comment>
<dbReference type="EC" id="7.1.1.2"/>
<dbReference type="EMBL" id="DQ312392">
    <property type="protein sequence ID" value="ABC47592.1"/>
    <property type="molecule type" value="Genomic_DNA"/>
</dbReference>
<dbReference type="EMBL" id="DQ312393">
    <property type="protein sequence ID" value="ABC47595.1"/>
    <property type="molecule type" value="Genomic_DNA"/>
</dbReference>
<dbReference type="EMBL" id="DQ312394">
    <property type="protein sequence ID" value="ABC47598.1"/>
    <property type="molecule type" value="Genomic_DNA"/>
</dbReference>
<dbReference type="EMBL" id="DQ312395">
    <property type="protein sequence ID" value="ABC47601.1"/>
    <property type="molecule type" value="Genomic_DNA"/>
</dbReference>
<dbReference type="SMR" id="Q1HUW0"/>
<dbReference type="GO" id="GO:0005743">
    <property type="term" value="C:mitochondrial inner membrane"/>
    <property type="evidence" value="ECO:0000250"/>
    <property type="project" value="UniProtKB"/>
</dbReference>
<dbReference type="GO" id="GO:0045271">
    <property type="term" value="C:respiratory chain complex I"/>
    <property type="evidence" value="ECO:0000250"/>
    <property type="project" value="UniProtKB"/>
</dbReference>
<dbReference type="GO" id="GO:0008137">
    <property type="term" value="F:NADH dehydrogenase (ubiquinone) activity"/>
    <property type="evidence" value="ECO:0000250"/>
    <property type="project" value="UniProtKB"/>
</dbReference>
<dbReference type="GO" id="GO:0042773">
    <property type="term" value="P:ATP synthesis coupled electron transport"/>
    <property type="evidence" value="ECO:0007669"/>
    <property type="project" value="InterPro"/>
</dbReference>
<dbReference type="FunFam" id="1.10.287.3510:FF:000002">
    <property type="entry name" value="NADH-ubiquinone oxidoreductase chain 4L"/>
    <property type="match status" value="1"/>
</dbReference>
<dbReference type="Gene3D" id="1.10.287.3510">
    <property type="match status" value="1"/>
</dbReference>
<dbReference type="InterPro" id="IPR001133">
    <property type="entry name" value="NADH_UbQ_OxRdtase_chain4L/K"/>
</dbReference>
<dbReference type="InterPro" id="IPR039428">
    <property type="entry name" value="NUOK/Mnh_C1-like"/>
</dbReference>
<dbReference type="PANTHER" id="PTHR11434:SF0">
    <property type="entry name" value="NADH-UBIQUINONE OXIDOREDUCTASE CHAIN 4L"/>
    <property type="match status" value="1"/>
</dbReference>
<dbReference type="PANTHER" id="PTHR11434">
    <property type="entry name" value="NADH-UBIQUINONE OXIDOREDUCTASE SUBUNIT ND4L"/>
    <property type="match status" value="1"/>
</dbReference>
<dbReference type="Pfam" id="PF00420">
    <property type="entry name" value="Oxidored_q2"/>
    <property type="match status" value="1"/>
</dbReference>
<sequence>MSLTYMNMFMAFTISLLGLLMYRSHMMSSLLCLEGMMLSLFVMMTMVILNTHLTLASMIPIILLVFAACEAALGLSLLVMVSTTYGMDYVQNLNLLQC</sequence>
<gene>
    <name type="primary">MT-ND4L</name>
    <name type="synonym">MTND4L</name>
    <name type="synonym">NADH4L</name>
    <name type="synonym">ND4L</name>
</gene>
<accession>Q1HUW0</accession>
<accession>Q1HUW6</accession>
<feature type="chain" id="PRO_0000275146" description="NADH-ubiquinone oxidoreductase chain 4L">
    <location>
        <begin position="1"/>
        <end position="98"/>
    </location>
</feature>
<feature type="transmembrane region" description="Helical" evidence="3">
    <location>
        <begin position="1"/>
        <end position="21"/>
    </location>
</feature>
<feature type="transmembrane region" description="Helical" evidence="3">
    <location>
        <begin position="29"/>
        <end position="49"/>
    </location>
</feature>
<feature type="transmembrane region" description="Helical" evidence="3">
    <location>
        <begin position="61"/>
        <end position="81"/>
    </location>
</feature>
<feature type="sequence variant">
    <original>T</original>
    <variation>M</variation>
    <location>
        <position position="13"/>
    </location>
</feature>
<organism>
    <name type="scientific">Vampyressa thyone</name>
    <name type="common">Northern little yellow-eared bat</name>
    <dbReference type="NCBI Taxonomy" id="362826"/>
    <lineage>
        <taxon>Eukaryota</taxon>
        <taxon>Metazoa</taxon>
        <taxon>Chordata</taxon>
        <taxon>Craniata</taxon>
        <taxon>Vertebrata</taxon>
        <taxon>Euteleostomi</taxon>
        <taxon>Mammalia</taxon>
        <taxon>Eutheria</taxon>
        <taxon>Laurasiatheria</taxon>
        <taxon>Chiroptera</taxon>
        <taxon>Yangochiroptera</taxon>
        <taxon>Phyllostomidae</taxon>
        <taxon>Stenodermatinae</taxon>
        <taxon>Vampyressa</taxon>
    </lineage>
</organism>